<name>GMPP2_ORYSJ</name>
<reference key="1">
    <citation type="journal article" date="2002" name="Nature">
        <title>The genome sequence and structure of rice chromosome 1.</title>
        <authorList>
            <person name="Sasaki T."/>
            <person name="Matsumoto T."/>
            <person name="Yamamoto K."/>
            <person name="Sakata K."/>
            <person name="Baba T."/>
            <person name="Katayose Y."/>
            <person name="Wu J."/>
            <person name="Niimura Y."/>
            <person name="Cheng Z."/>
            <person name="Nagamura Y."/>
            <person name="Antonio B.A."/>
            <person name="Kanamori H."/>
            <person name="Hosokawa S."/>
            <person name="Masukawa M."/>
            <person name="Arikawa K."/>
            <person name="Chiden Y."/>
            <person name="Hayashi M."/>
            <person name="Okamoto M."/>
            <person name="Ando T."/>
            <person name="Aoki H."/>
            <person name="Arita K."/>
            <person name="Hamada M."/>
            <person name="Harada C."/>
            <person name="Hijishita S."/>
            <person name="Honda M."/>
            <person name="Ichikawa Y."/>
            <person name="Idonuma A."/>
            <person name="Iijima M."/>
            <person name="Ikeda M."/>
            <person name="Ikeno M."/>
            <person name="Ito S."/>
            <person name="Ito T."/>
            <person name="Ito Y."/>
            <person name="Ito Y."/>
            <person name="Iwabuchi A."/>
            <person name="Kamiya K."/>
            <person name="Karasawa W."/>
            <person name="Katagiri S."/>
            <person name="Kikuta A."/>
            <person name="Kobayashi N."/>
            <person name="Kono I."/>
            <person name="Machita K."/>
            <person name="Maehara T."/>
            <person name="Mizuno H."/>
            <person name="Mizubayashi T."/>
            <person name="Mukai Y."/>
            <person name="Nagasaki H."/>
            <person name="Nakashima M."/>
            <person name="Nakama Y."/>
            <person name="Nakamichi Y."/>
            <person name="Nakamura M."/>
            <person name="Namiki N."/>
            <person name="Negishi M."/>
            <person name="Ohta I."/>
            <person name="Ono N."/>
            <person name="Saji S."/>
            <person name="Sakai K."/>
            <person name="Shibata M."/>
            <person name="Shimokawa T."/>
            <person name="Shomura A."/>
            <person name="Song J."/>
            <person name="Takazaki Y."/>
            <person name="Terasawa K."/>
            <person name="Tsuji K."/>
            <person name="Waki K."/>
            <person name="Yamagata H."/>
            <person name="Yamane H."/>
            <person name="Yoshiki S."/>
            <person name="Yoshihara R."/>
            <person name="Yukawa K."/>
            <person name="Zhong H."/>
            <person name="Iwama H."/>
            <person name="Endo T."/>
            <person name="Ito H."/>
            <person name="Hahn J.H."/>
            <person name="Kim H.-I."/>
            <person name="Eun M.-Y."/>
            <person name="Yano M."/>
            <person name="Jiang J."/>
            <person name="Gojobori T."/>
        </authorList>
    </citation>
    <scope>NUCLEOTIDE SEQUENCE [LARGE SCALE GENOMIC DNA]</scope>
    <source>
        <strain>cv. Nipponbare</strain>
    </source>
</reference>
<reference key="2">
    <citation type="journal article" date="2005" name="Nature">
        <title>The map-based sequence of the rice genome.</title>
        <authorList>
            <consortium name="International rice genome sequencing project (IRGSP)"/>
        </authorList>
    </citation>
    <scope>NUCLEOTIDE SEQUENCE [LARGE SCALE GENOMIC DNA]</scope>
    <source>
        <strain>cv. Nipponbare</strain>
    </source>
</reference>
<reference key="3">
    <citation type="journal article" date="2008" name="Nucleic Acids Res.">
        <title>The rice annotation project database (RAP-DB): 2008 update.</title>
        <authorList>
            <consortium name="The rice annotation project (RAP)"/>
        </authorList>
    </citation>
    <scope>GENOME REANNOTATION</scope>
    <source>
        <strain>cv. Nipponbare</strain>
    </source>
</reference>
<reference key="4">
    <citation type="journal article" date="2013" name="Rice">
        <title>Improvement of the Oryza sativa Nipponbare reference genome using next generation sequence and optical map data.</title>
        <authorList>
            <person name="Kawahara Y."/>
            <person name="de la Bastide M."/>
            <person name="Hamilton J.P."/>
            <person name="Kanamori H."/>
            <person name="McCombie W.R."/>
            <person name="Ouyang S."/>
            <person name="Schwartz D.C."/>
            <person name="Tanaka T."/>
            <person name="Wu J."/>
            <person name="Zhou S."/>
            <person name="Childs K.L."/>
            <person name="Davidson R.M."/>
            <person name="Lin H."/>
            <person name="Quesada-Ocampo L."/>
            <person name="Vaillancourt B."/>
            <person name="Sakai H."/>
            <person name="Lee S.S."/>
            <person name="Kim J."/>
            <person name="Numa H."/>
            <person name="Itoh T."/>
            <person name="Buell C.R."/>
            <person name="Matsumoto T."/>
        </authorList>
    </citation>
    <scope>GENOME REANNOTATION</scope>
    <source>
        <strain>cv. Nipponbare</strain>
    </source>
</reference>
<reference key="5">
    <citation type="journal article" date="2005" name="PLoS Biol.">
        <title>The genomes of Oryza sativa: a history of duplications.</title>
        <authorList>
            <person name="Yu J."/>
            <person name="Wang J."/>
            <person name="Lin W."/>
            <person name="Li S."/>
            <person name="Li H."/>
            <person name="Zhou J."/>
            <person name="Ni P."/>
            <person name="Dong W."/>
            <person name="Hu S."/>
            <person name="Zeng C."/>
            <person name="Zhang J."/>
            <person name="Zhang Y."/>
            <person name="Li R."/>
            <person name="Xu Z."/>
            <person name="Li S."/>
            <person name="Li X."/>
            <person name="Zheng H."/>
            <person name="Cong L."/>
            <person name="Lin L."/>
            <person name="Yin J."/>
            <person name="Geng J."/>
            <person name="Li G."/>
            <person name="Shi J."/>
            <person name="Liu J."/>
            <person name="Lv H."/>
            <person name="Li J."/>
            <person name="Wang J."/>
            <person name="Deng Y."/>
            <person name="Ran L."/>
            <person name="Shi X."/>
            <person name="Wang X."/>
            <person name="Wu Q."/>
            <person name="Li C."/>
            <person name="Ren X."/>
            <person name="Wang J."/>
            <person name="Wang X."/>
            <person name="Li D."/>
            <person name="Liu D."/>
            <person name="Zhang X."/>
            <person name="Ji Z."/>
            <person name="Zhao W."/>
            <person name="Sun Y."/>
            <person name="Zhang Z."/>
            <person name="Bao J."/>
            <person name="Han Y."/>
            <person name="Dong L."/>
            <person name="Ji J."/>
            <person name="Chen P."/>
            <person name="Wu S."/>
            <person name="Liu J."/>
            <person name="Xiao Y."/>
            <person name="Bu D."/>
            <person name="Tan J."/>
            <person name="Yang L."/>
            <person name="Ye C."/>
            <person name="Zhang J."/>
            <person name="Xu J."/>
            <person name="Zhou Y."/>
            <person name="Yu Y."/>
            <person name="Zhang B."/>
            <person name="Zhuang S."/>
            <person name="Wei H."/>
            <person name="Liu B."/>
            <person name="Lei M."/>
            <person name="Yu H."/>
            <person name="Li Y."/>
            <person name="Xu H."/>
            <person name="Wei S."/>
            <person name="He X."/>
            <person name="Fang L."/>
            <person name="Zhang Z."/>
            <person name="Zhang Y."/>
            <person name="Huang X."/>
            <person name="Su Z."/>
            <person name="Tong W."/>
            <person name="Li J."/>
            <person name="Tong Z."/>
            <person name="Li S."/>
            <person name="Ye J."/>
            <person name="Wang L."/>
            <person name="Fang L."/>
            <person name="Lei T."/>
            <person name="Chen C.-S."/>
            <person name="Chen H.-C."/>
            <person name="Xu Z."/>
            <person name="Li H."/>
            <person name="Huang H."/>
            <person name="Zhang F."/>
            <person name="Xu H."/>
            <person name="Li N."/>
            <person name="Zhao C."/>
            <person name="Li S."/>
            <person name="Dong L."/>
            <person name="Huang Y."/>
            <person name="Li L."/>
            <person name="Xi Y."/>
            <person name="Qi Q."/>
            <person name="Li W."/>
            <person name="Zhang B."/>
            <person name="Hu W."/>
            <person name="Zhang Y."/>
            <person name="Tian X."/>
            <person name="Jiao Y."/>
            <person name="Liang X."/>
            <person name="Jin J."/>
            <person name="Gao L."/>
            <person name="Zheng W."/>
            <person name="Hao B."/>
            <person name="Liu S.-M."/>
            <person name="Wang W."/>
            <person name="Yuan L."/>
            <person name="Cao M."/>
            <person name="McDermott J."/>
            <person name="Samudrala R."/>
            <person name="Wang J."/>
            <person name="Wong G.K.-S."/>
            <person name="Yang H."/>
        </authorList>
    </citation>
    <scope>NUCLEOTIDE SEQUENCE [LARGE SCALE GENOMIC DNA]</scope>
    <source>
        <strain>cv. Nipponbare</strain>
    </source>
</reference>
<reference key="6">
    <citation type="journal article" date="2003" name="Science">
        <title>Collection, mapping, and annotation of over 28,000 cDNA clones from japonica rice.</title>
        <authorList>
            <consortium name="The rice full-length cDNA consortium"/>
        </authorList>
    </citation>
    <scope>NUCLEOTIDE SEQUENCE [LARGE SCALE MRNA]</scope>
    <source>
        <strain>cv. Nipponbare</strain>
    </source>
</reference>
<gene>
    <name type="ordered locus">Os01g0847200</name>
    <name type="ORF">OsJ_26535</name>
    <name type="ORF">P0005H10.12</name>
    <name type="ORF">P0446B05.40</name>
</gene>
<accession>Q941T9</accession>
<accession>A0A0P0VAA2</accession>
<dbReference type="EC" id="2.7.7.13"/>
<dbReference type="EMBL" id="AP003251">
    <property type="protein sequence ID" value="BAB89577.1"/>
    <property type="molecule type" value="Genomic_DNA"/>
</dbReference>
<dbReference type="EMBL" id="AP004127">
    <property type="protein sequence ID" value="BAB64272.1"/>
    <property type="molecule type" value="Genomic_DNA"/>
</dbReference>
<dbReference type="EMBL" id="AP008207">
    <property type="protein sequence ID" value="BAF06709.1"/>
    <property type="molecule type" value="Genomic_DNA"/>
</dbReference>
<dbReference type="EMBL" id="AP014957">
    <property type="protein sequence ID" value="BAS75213.1"/>
    <property type="molecule type" value="Genomic_DNA"/>
</dbReference>
<dbReference type="EMBL" id="CM000145">
    <property type="protein sequence ID" value="EAZ41985.1"/>
    <property type="molecule type" value="Genomic_DNA"/>
</dbReference>
<dbReference type="EMBL" id="AK061976">
    <property type="protein sequence ID" value="BAG88187.1"/>
    <property type="molecule type" value="mRNA"/>
</dbReference>
<dbReference type="RefSeq" id="XP_015622139.1">
    <property type="nucleotide sequence ID" value="XM_015766653.1"/>
</dbReference>
<dbReference type="SMR" id="Q941T9"/>
<dbReference type="FunCoup" id="Q941T9">
    <property type="interactions" value="1918"/>
</dbReference>
<dbReference type="STRING" id="39947.Q941T9"/>
<dbReference type="PaxDb" id="39947-Q941T9"/>
<dbReference type="EnsemblPlants" id="Os01t0847200-01">
    <property type="protein sequence ID" value="Os01t0847200-01"/>
    <property type="gene ID" value="Os01g0847200"/>
</dbReference>
<dbReference type="EnsemblPlants" id="Os01t0847200-02">
    <property type="protein sequence ID" value="Os01t0847200-02"/>
    <property type="gene ID" value="Os01g0847200"/>
</dbReference>
<dbReference type="Gramene" id="Os01t0847200-01">
    <property type="protein sequence ID" value="Os01t0847200-01"/>
    <property type="gene ID" value="Os01g0847200"/>
</dbReference>
<dbReference type="Gramene" id="Os01t0847200-02">
    <property type="protein sequence ID" value="Os01t0847200-02"/>
    <property type="gene ID" value="Os01g0847200"/>
</dbReference>
<dbReference type="KEGG" id="dosa:Os01g0847200"/>
<dbReference type="eggNOG" id="KOG1322">
    <property type="taxonomic scope" value="Eukaryota"/>
</dbReference>
<dbReference type="HOGENOM" id="CLU_029499_0_0_1"/>
<dbReference type="InParanoid" id="Q941T9"/>
<dbReference type="OMA" id="GRPFLEW"/>
<dbReference type="OrthoDB" id="1733332at2759"/>
<dbReference type="BRENDA" id="2.7.7.13">
    <property type="organism ID" value="8948"/>
</dbReference>
<dbReference type="PlantReactome" id="R-OSA-1119410">
    <property type="pathway name" value="Ascorbate biosynthesis"/>
</dbReference>
<dbReference type="UniPathway" id="UPA00126">
    <property type="reaction ID" value="UER00930"/>
</dbReference>
<dbReference type="Proteomes" id="UP000000763">
    <property type="component" value="Chromosome 1"/>
</dbReference>
<dbReference type="Proteomes" id="UP000007752">
    <property type="component" value="Chromosome 8"/>
</dbReference>
<dbReference type="Proteomes" id="UP000059680">
    <property type="component" value="Chromosome 1"/>
</dbReference>
<dbReference type="GO" id="GO:0005737">
    <property type="term" value="C:cytoplasm"/>
    <property type="evidence" value="ECO:0000318"/>
    <property type="project" value="GO_Central"/>
</dbReference>
<dbReference type="GO" id="GO:0005525">
    <property type="term" value="F:GTP binding"/>
    <property type="evidence" value="ECO:0007669"/>
    <property type="project" value="UniProtKB-KW"/>
</dbReference>
<dbReference type="GO" id="GO:0004475">
    <property type="term" value="F:mannose-1-phosphate guanylyltransferase (GTP) activity"/>
    <property type="evidence" value="ECO:0000318"/>
    <property type="project" value="GO_Central"/>
</dbReference>
<dbReference type="GO" id="GO:0009298">
    <property type="term" value="P:GDP-mannose biosynthetic process"/>
    <property type="evidence" value="ECO:0000318"/>
    <property type="project" value="GO_Central"/>
</dbReference>
<dbReference type="GO" id="GO:0006486">
    <property type="term" value="P:protein glycosylation"/>
    <property type="evidence" value="ECO:0000318"/>
    <property type="project" value="GO_Central"/>
</dbReference>
<dbReference type="CDD" id="cd06425">
    <property type="entry name" value="M1P_guanylylT_B_like_N"/>
    <property type="match status" value="1"/>
</dbReference>
<dbReference type="FunFam" id="3.90.550.10:FF:000013">
    <property type="entry name" value="mannose-1-phosphate guanyltransferase beta"/>
    <property type="match status" value="1"/>
</dbReference>
<dbReference type="Gene3D" id="2.160.10.10">
    <property type="entry name" value="Hexapeptide repeat proteins"/>
    <property type="match status" value="1"/>
</dbReference>
<dbReference type="Gene3D" id="3.90.550.10">
    <property type="entry name" value="Spore Coat Polysaccharide Biosynthesis Protein SpsA, Chain A"/>
    <property type="match status" value="1"/>
</dbReference>
<dbReference type="InterPro" id="IPR056729">
    <property type="entry name" value="GMPPB_C"/>
</dbReference>
<dbReference type="InterPro" id="IPR045233">
    <property type="entry name" value="GMPPB_N"/>
</dbReference>
<dbReference type="InterPro" id="IPR018357">
    <property type="entry name" value="Hexapep_transf_CS"/>
</dbReference>
<dbReference type="InterPro" id="IPR050486">
    <property type="entry name" value="Mannose-1P_guanyltransferase"/>
</dbReference>
<dbReference type="InterPro" id="IPR005835">
    <property type="entry name" value="NTP_transferase_dom"/>
</dbReference>
<dbReference type="InterPro" id="IPR029044">
    <property type="entry name" value="Nucleotide-diphossugar_trans"/>
</dbReference>
<dbReference type="PANTHER" id="PTHR22572">
    <property type="entry name" value="SUGAR-1-PHOSPHATE GUANYL TRANSFERASE"/>
    <property type="match status" value="1"/>
</dbReference>
<dbReference type="Pfam" id="PF25087">
    <property type="entry name" value="GMPPB_C"/>
    <property type="match status" value="1"/>
</dbReference>
<dbReference type="Pfam" id="PF00483">
    <property type="entry name" value="NTP_transferase"/>
    <property type="match status" value="1"/>
</dbReference>
<dbReference type="SUPFAM" id="SSF53448">
    <property type="entry name" value="Nucleotide-diphospho-sugar transferases"/>
    <property type="match status" value="1"/>
</dbReference>
<dbReference type="PROSITE" id="PS00101">
    <property type="entry name" value="HEXAPEP_TRANSFERASES"/>
    <property type="match status" value="1"/>
</dbReference>
<proteinExistence type="evidence at transcript level"/>
<feature type="chain" id="PRO_0000412467" description="Probable mannose-1-phosphate guanylyltransferase 2">
    <location>
        <begin position="1"/>
        <end position="361"/>
    </location>
</feature>
<feature type="binding site" evidence="2">
    <location>
        <position position="6"/>
    </location>
    <ligand>
        <name>GDP-alpha-D-mannose</name>
        <dbReference type="ChEBI" id="CHEBI:57527"/>
    </ligand>
</feature>
<feature type="binding site" evidence="2">
    <location>
        <position position="7"/>
    </location>
    <ligand>
        <name>GDP-alpha-D-mannose</name>
        <dbReference type="ChEBI" id="CHEBI:57527"/>
    </ligand>
</feature>
<feature type="binding site" evidence="2">
    <location>
        <position position="9"/>
    </location>
    <ligand>
        <name>diphosphate</name>
        <dbReference type="ChEBI" id="CHEBI:33019"/>
    </ligand>
</feature>
<feature type="binding site" evidence="2">
    <location>
        <position position="11"/>
    </location>
    <ligand>
        <name>diphosphate</name>
        <dbReference type="ChEBI" id="CHEBI:33019"/>
    </ligand>
</feature>
<feature type="binding site" evidence="2">
    <location>
        <position position="12"/>
    </location>
    <ligand>
        <name>diphosphate</name>
        <dbReference type="ChEBI" id="CHEBI:33019"/>
    </ligand>
</feature>
<feature type="binding site" evidence="2">
    <location>
        <position position="13"/>
    </location>
    <ligand>
        <name>diphosphate</name>
        <dbReference type="ChEBI" id="CHEBI:33019"/>
    </ligand>
</feature>
<feature type="binding site" evidence="2">
    <location>
        <position position="23"/>
    </location>
    <ligand>
        <name>diphosphate</name>
        <dbReference type="ChEBI" id="CHEBI:33019"/>
    </ligand>
</feature>
<feature type="binding site" evidence="2">
    <location>
        <position position="85"/>
    </location>
    <ligand>
        <name>GDP-alpha-D-mannose</name>
        <dbReference type="ChEBI" id="CHEBI:57527"/>
    </ligand>
</feature>
<feature type="binding site" evidence="2">
    <location>
        <position position="109"/>
    </location>
    <ligand>
        <name>GDP-alpha-D-mannose</name>
        <dbReference type="ChEBI" id="CHEBI:57527"/>
    </ligand>
</feature>
<feature type="binding site" evidence="2">
    <location>
        <position position="111"/>
    </location>
    <ligand>
        <name>GDP-alpha-D-mannose</name>
        <dbReference type="ChEBI" id="CHEBI:57527"/>
    </ligand>
</feature>
<feature type="binding site" evidence="2">
    <location>
        <position position="146"/>
    </location>
    <ligand>
        <name>GDP-alpha-D-mannose</name>
        <dbReference type="ChEBI" id="CHEBI:57527"/>
    </ligand>
</feature>
<feature type="binding site" evidence="2">
    <location>
        <position position="173"/>
    </location>
    <ligand>
        <name>GDP-alpha-D-mannose</name>
        <dbReference type="ChEBI" id="CHEBI:57527"/>
    </ligand>
</feature>
<sequence length="361" mass="39606">MKALILVGGFGTRLRPLTLSFPKPLVDFANKPMILHQIEALKEVGVTEVVLAINYRPEVMLNFLKDFEDKLGITITCSQETEPLGTAGPLALARDKLVDGSGEPFFVLNSDVISEYPFAELIKFHKSHGGEATIMVTKVDEPSKYGVVVMEEVTGMVEKFVEKPKIFVGNKINAGIYLLNPSVLDRIELKPTSIEKEVFPRIASDAKLFALVLPGFWMDVGQPRDYITGLRLYLDSLRKRSTNRLATGAHIVGNVLVHESAKIGEGCLIGPDVAIGPGCVVEDGVRLSRCTVMRGVHIKKHACISNSIIGWHSTVGQWARIENMTILGEDVHVGDEVYTNGGVVLPHKEIKSSILKPEIVM</sequence>
<comment type="function">
    <text evidence="1">Catalyzes a reaction of the Smirnoff-Wheeler pathway, the major route to ascorbate biosynthesis in plants.</text>
</comment>
<comment type="catalytic activity">
    <reaction>
        <text>alpha-D-mannose 1-phosphate + GTP + H(+) = GDP-alpha-D-mannose + diphosphate</text>
        <dbReference type="Rhea" id="RHEA:15229"/>
        <dbReference type="ChEBI" id="CHEBI:15378"/>
        <dbReference type="ChEBI" id="CHEBI:33019"/>
        <dbReference type="ChEBI" id="CHEBI:37565"/>
        <dbReference type="ChEBI" id="CHEBI:57527"/>
        <dbReference type="ChEBI" id="CHEBI:58409"/>
        <dbReference type="EC" id="2.7.7.13"/>
    </reaction>
</comment>
<comment type="pathway">
    <text>Nucleotide-sugar biosynthesis; GDP-alpha-D-mannose biosynthesis; GDP-alpha-D-mannose from alpha-D-mannose 1-phosphate (GTP route): step 1/1.</text>
</comment>
<comment type="similarity">
    <text evidence="3">Belongs to the transferase hexapeptide repeat family.</text>
</comment>
<organism>
    <name type="scientific">Oryza sativa subsp. japonica</name>
    <name type="common">Rice</name>
    <dbReference type="NCBI Taxonomy" id="39947"/>
    <lineage>
        <taxon>Eukaryota</taxon>
        <taxon>Viridiplantae</taxon>
        <taxon>Streptophyta</taxon>
        <taxon>Embryophyta</taxon>
        <taxon>Tracheophyta</taxon>
        <taxon>Spermatophyta</taxon>
        <taxon>Magnoliopsida</taxon>
        <taxon>Liliopsida</taxon>
        <taxon>Poales</taxon>
        <taxon>Poaceae</taxon>
        <taxon>BOP clade</taxon>
        <taxon>Oryzoideae</taxon>
        <taxon>Oryzeae</taxon>
        <taxon>Oryzinae</taxon>
        <taxon>Oryza</taxon>
        <taxon>Oryza sativa</taxon>
    </lineage>
</organism>
<evidence type="ECO:0000250" key="1"/>
<evidence type="ECO:0000250" key="2">
    <source>
        <dbReference type="UniProtKB" id="O22287"/>
    </source>
</evidence>
<evidence type="ECO:0000305" key="3"/>
<keyword id="KW-0342">GTP-binding</keyword>
<keyword id="KW-0547">Nucleotide-binding</keyword>
<keyword id="KW-0548">Nucleotidyltransferase</keyword>
<keyword id="KW-1185">Reference proteome</keyword>
<keyword id="KW-0808">Transferase</keyword>
<protein>
    <recommendedName>
        <fullName>Probable mannose-1-phosphate guanylyltransferase 2</fullName>
        <ecNumber>2.7.7.13</ecNumber>
    </recommendedName>
</protein>